<protein>
    <recommendedName>
        <fullName evidence="1">Probable nicotinate-nucleotide adenylyltransferase</fullName>
        <ecNumber evidence="1">2.7.7.18</ecNumber>
    </recommendedName>
    <alternativeName>
        <fullName evidence="1">Deamido-NAD(+) diphosphorylase</fullName>
    </alternativeName>
    <alternativeName>
        <fullName evidence="1">Deamido-NAD(+) pyrophosphorylase</fullName>
    </alternativeName>
    <alternativeName>
        <fullName evidence="1">Nicotinate mononucleotide adenylyltransferase</fullName>
        <shortName evidence="1">NaMN adenylyltransferase</shortName>
    </alternativeName>
</protein>
<proteinExistence type="inferred from homology"/>
<dbReference type="EC" id="2.7.7.18" evidence="1"/>
<dbReference type="EMBL" id="BX294147">
    <property type="protein sequence ID" value="CAD78646.1"/>
    <property type="molecule type" value="Genomic_DNA"/>
</dbReference>
<dbReference type="RefSeq" id="NP_868368.1">
    <property type="nucleotide sequence ID" value="NC_005027.1"/>
</dbReference>
<dbReference type="SMR" id="Q7UFN6"/>
<dbReference type="FunCoup" id="Q7UFN6">
    <property type="interactions" value="276"/>
</dbReference>
<dbReference type="STRING" id="243090.RB8455"/>
<dbReference type="EnsemblBacteria" id="CAD78646">
    <property type="protein sequence ID" value="CAD78646"/>
    <property type="gene ID" value="RB8455"/>
</dbReference>
<dbReference type="KEGG" id="rba:RB8455"/>
<dbReference type="PATRIC" id="fig|243090.15.peg.4065"/>
<dbReference type="eggNOG" id="COG1057">
    <property type="taxonomic scope" value="Bacteria"/>
</dbReference>
<dbReference type="HOGENOM" id="CLU_069765_0_1_0"/>
<dbReference type="InParanoid" id="Q7UFN6"/>
<dbReference type="OrthoDB" id="5295945at2"/>
<dbReference type="UniPathway" id="UPA00253">
    <property type="reaction ID" value="UER00332"/>
</dbReference>
<dbReference type="Proteomes" id="UP000001025">
    <property type="component" value="Chromosome"/>
</dbReference>
<dbReference type="GO" id="GO:0005524">
    <property type="term" value="F:ATP binding"/>
    <property type="evidence" value="ECO:0007669"/>
    <property type="project" value="UniProtKB-KW"/>
</dbReference>
<dbReference type="GO" id="GO:0000309">
    <property type="term" value="F:nicotinamide-nucleotide adenylyltransferase activity"/>
    <property type="evidence" value="ECO:0000318"/>
    <property type="project" value="GO_Central"/>
</dbReference>
<dbReference type="GO" id="GO:0004515">
    <property type="term" value="F:nicotinate-nucleotide adenylyltransferase activity"/>
    <property type="evidence" value="ECO:0000318"/>
    <property type="project" value="GO_Central"/>
</dbReference>
<dbReference type="GO" id="GO:0009435">
    <property type="term" value="P:NAD biosynthetic process"/>
    <property type="evidence" value="ECO:0000318"/>
    <property type="project" value="GO_Central"/>
</dbReference>
<dbReference type="CDD" id="cd02165">
    <property type="entry name" value="NMNAT"/>
    <property type="match status" value="1"/>
</dbReference>
<dbReference type="Gene3D" id="3.40.50.620">
    <property type="entry name" value="HUPs"/>
    <property type="match status" value="1"/>
</dbReference>
<dbReference type="HAMAP" id="MF_00244">
    <property type="entry name" value="NaMN_adenylyltr"/>
    <property type="match status" value="1"/>
</dbReference>
<dbReference type="InterPro" id="IPR004821">
    <property type="entry name" value="Cyt_trans-like"/>
</dbReference>
<dbReference type="InterPro" id="IPR005248">
    <property type="entry name" value="NadD/NMNAT"/>
</dbReference>
<dbReference type="InterPro" id="IPR014729">
    <property type="entry name" value="Rossmann-like_a/b/a_fold"/>
</dbReference>
<dbReference type="NCBIfam" id="TIGR00125">
    <property type="entry name" value="cyt_tran_rel"/>
    <property type="match status" value="1"/>
</dbReference>
<dbReference type="NCBIfam" id="TIGR00482">
    <property type="entry name" value="nicotinate (nicotinamide) nucleotide adenylyltransferase"/>
    <property type="match status" value="1"/>
</dbReference>
<dbReference type="NCBIfam" id="NF000840">
    <property type="entry name" value="PRK00071.1-3"/>
    <property type="match status" value="1"/>
</dbReference>
<dbReference type="PANTHER" id="PTHR39321">
    <property type="entry name" value="NICOTINATE-NUCLEOTIDE ADENYLYLTRANSFERASE-RELATED"/>
    <property type="match status" value="1"/>
</dbReference>
<dbReference type="PANTHER" id="PTHR39321:SF3">
    <property type="entry name" value="PHOSPHOPANTETHEINE ADENYLYLTRANSFERASE"/>
    <property type="match status" value="1"/>
</dbReference>
<dbReference type="Pfam" id="PF01467">
    <property type="entry name" value="CTP_transf_like"/>
    <property type="match status" value="1"/>
</dbReference>
<dbReference type="SUPFAM" id="SSF52374">
    <property type="entry name" value="Nucleotidylyl transferase"/>
    <property type="match status" value="1"/>
</dbReference>
<feature type="chain" id="PRO_0000181435" description="Probable nicotinate-nucleotide adenylyltransferase">
    <location>
        <begin position="1"/>
        <end position="214"/>
    </location>
</feature>
<name>NADD_RHOBA</name>
<evidence type="ECO:0000255" key="1">
    <source>
        <dbReference type="HAMAP-Rule" id="MF_00244"/>
    </source>
</evidence>
<accession>Q7UFN6</accession>
<reference key="1">
    <citation type="journal article" date="2003" name="Proc. Natl. Acad. Sci. U.S.A.">
        <title>Complete genome sequence of the marine planctomycete Pirellula sp. strain 1.</title>
        <authorList>
            <person name="Gloeckner F.O."/>
            <person name="Kube M."/>
            <person name="Bauer M."/>
            <person name="Teeling H."/>
            <person name="Lombardot T."/>
            <person name="Ludwig W."/>
            <person name="Gade D."/>
            <person name="Beck A."/>
            <person name="Borzym K."/>
            <person name="Heitmann K."/>
            <person name="Rabus R."/>
            <person name="Schlesner H."/>
            <person name="Amann R."/>
            <person name="Reinhardt R."/>
        </authorList>
    </citation>
    <scope>NUCLEOTIDE SEQUENCE [LARGE SCALE GENOMIC DNA]</scope>
    <source>
        <strain>DSM 10527 / NCIMB 13988 / SH1</strain>
    </source>
</reference>
<organism>
    <name type="scientific">Rhodopirellula baltica (strain DSM 10527 / NCIMB 13988 / SH1)</name>
    <dbReference type="NCBI Taxonomy" id="243090"/>
    <lineage>
        <taxon>Bacteria</taxon>
        <taxon>Pseudomonadati</taxon>
        <taxon>Planctomycetota</taxon>
        <taxon>Planctomycetia</taxon>
        <taxon>Pirellulales</taxon>
        <taxon>Pirellulaceae</taxon>
        <taxon>Rhodopirellula</taxon>
    </lineage>
</organism>
<gene>
    <name evidence="1" type="primary">nadD</name>
    <name type="ordered locus">RB8455</name>
</gene>
<comment type="function">
    <text evidence="1">Catalyzes the reversible adenylation of nicotinate mononucleotide (NaMN) to nicotinic acid adenine dinucleotide (NaAD).</text>
</comment>
<comment type="catalytic activity">
    <reaction evidence="1">
        <text>nicotinate beta-D-ribonucleotide + ATP + H(+) = deamido-NAD(+) + diphosphate</text>
        <dbReference type="Rhea" id="RHEA:22860"/>
        <dbReference type="ChEBI" id="CHEBI:15378"/>
        <dbReference type="ChEBI" id="CHEBI:30616"/>
        <dbReference type="ChEBI" id="CHEBI:33019"/>
        <dbReference type="ChEBI" id="CHEBI:57502"/>
        <dbReference type="ChEBI" id="CHEBI:58437"/>
        <dbReference type="EC" id="2.7.7.18"/>
    </reaction>
</comment>
<comment type="pathway">
    <text evidence="1">Cofactor biosynthesis; NAD(+) biosynthesis; deamido-NAD(+) from nicotinate D-ribonucleotide: step 1/1.</text>
</comment>
<comment type="similarity">
    <text evidence="1">Belongs to the NadD family.</text>
</comment>
<keyword id="KW-0067">ATP-binding</keyword>
<keyword id="KW-0520">NAD</keyword>
<keyword id="KW-0547">Nucleotide-binding</keyword>
<keyword id="KW-0548">Nucleotidyltransferase</keyword>
<keyword id="KW-0662">Pyridine nucleotide biosynthesis</keyword>
<keyword id="KW-1185">Reference proteome</keyword>
<keyword id="KW-0808">Transferase</keyword>
<sequence length="214" mass="24192">MSASETTPQSNHGIGILGGSFDPVHVGHLWMAESALEQLPIEHVRWIPAATSPLKPHGPVASNEHRLQMLRLALSGQSGLVIDDWELRQDSVSYTLLTLEYLQEQFPDRPLYLIIGADSLASFDRWREPEQILKRCHLAVIARGGDPPPDYSILDGMTDETQIQRIRESQIQMPQIEISSSDLRNRIATGRSIRFRVPHPVATLIDNEKMYRVR</sequence>